<feature type="chain" id="PRO_1000088919" description="Ribosome-binding factor A">
    <location>
        <begin position="1"/>
        <end position="123"/>
    </location>
</feature>
<gene>
    <name evidence="1" type="primary">rbfA</name>
    <name type="ordered locus">Rpic_1118</name>
</gene>
<name>RBFA_RALPJ</name>
<protein>
    <recommendedName>
        <fullName evidence="1">Ribosome-binding factor A</fullName>
    </recommendedName>
</protein>
<sequence length="123" mass="13618">MPKKSGSAAGRNVRIADQIQRDLAELIQREIKNPAMGLVTLQSVTLTPDYAHAKIYFTVLGAEPEVAGAILNEKAGYLHSLLFKRLHIHTVPTLHFHFDGSVERGIEMSRLIDEANATRAKDD</sequence>
<reference key="1">
    <citation type="submission" date="2008-05" db="EMBL/GenBank/DDBJ databases">
        <title>Complete sequence of chromosome 1 of Ralstonia pickettii 12J.</title>
        <authorList>
            <person name="Lucas S."/>
            <person name="Copeland A."/>
            <person name="Lapidus A."/>
            <person name="Glavina del Rio T."/>
            <person name="Dalin E."/>
            <person name="Tice H."/>
            <person name="Bruce D."/>
            <person name="Goodwin L."/>
            <person name="Pitluck S."/>
            <person name="Meincke L."/>
            <person name="Brettin T."/>
            <person name="Detter J.C."/>
            <person name="Han C."/>
            <person name="Kuske C.R."/>
            <person name="Schmutz J."/>
            <person name="Larimer F."/>
            <person name="Land M."/>
            <person name="Hauser L."/>
            <person name="Kyrpides N."/>
            <person name="Mikhailova N."/>
            <person name="Marsh T."/>
            <person name="Richardson P."/>
        </authorList>
    </citation>
    <scope>NUCLEOTIDE SEQUENCE [LARGE SCALE GENOMIC DNA]</scope>
    <source>
        <strain>12J</strain>
    </source>
</reference>
<keyword id="KW-0963">Cytoplasm</keyword>
<keyword id="KW-0690">Ribosome biogenesis</keyword>
<dbReference type="EMBL" id="CP001068">
    <property type="protein sequence ID" value="ACD26266.1"/>
    <property type="molecule type" value="Genomic_DNA"/>
</dbReference>
<dbReference type="SMR" id="B2UAA4"/>
<dbReference type="STRING" id="402626.Rpic_1118"/>
<dbReference type="KEGG" id="rpi:Rpic_1118"/>
<dbReference type="eggNOG" id="COG0858">
    <property type="taxonomic scope" value="Bacteria"/>
</dbReference>
<dbReference type="HOGENOM" id="CLU_089475_5_1_4"/>
<dbReference type="GO" id="GO:0005829">
    <property type="term" value="C:cytosol"/>
    <property type="evidence" value="ECO:0007669"/>
    <property type="project" value="TreeGrafter"/>
</dbReference>
<dbReference type="GO" id="GO:0043024">
    <property type="term" value="F:ribosomal small subunit binding"/>
    <property type="evidence" value="ECO:0007669"/>
    <property type="project" value="TreeGrafter"/>
</dbReference>
<dbReference type="GO" id="GO:0030490">
    <property type="term" value="P:maturation of SSU-rRNA"/>
    <property type="evidence" value="ECO:0007669"/>
    <property type="project" value="UniProtKB-UniRule"/>
</dbReference>
<dbReference type="Gene3D" id="3.30.300.20">
    <property type="match status" value="1"/>
</dbReference>
<dbReference type="HAMAP" id="MF_00003">
    <property type="entry name" value="RbfA"/>
    <property type="match status" value="1"/>
</dbReference>
<dbReference type="InterPro" id="IPR015946">
    <property type="entry name" value="KH_dom-like_a/b"/>
</dbReference>
<dbReference type="InterPro" id="IPR000238">
    <property type="entry name" value="RbfA"/>
</dbReference>
<dbReference type="InterPro" id="IPR023799">
    <property type="entry name" value="RbfA_dom_sf"/>
</dbReference>
<dbReference type="NCBIfam" id="TIGR00082">
    <property type="entry name" value="rbfA"/>
    <property type="match status" value="1"/>
</dbReference>
<dbReference type="PANTHER" id="PTHR33515">
    <property type="entry name" value="RIBOSOME-BINDING FACTOR A, CHLOROPLASTIC-RELATED"/>
    <property type="match status" value="1"/>
</dbReference>
<dbReference type="PANTHER" id="PTHR33515:SF1">
    <property type="entry name" value="RIBOSOME-BINDING FACTOR A, CHLOROPLASTIC-RELATED"/>
    <property type="match status" value="1"/>
</dbReference>
<dbReference type="Pfam" id="PF02033">
    <property type="entry name" value="RBFA"/>
    <property type="match status" value="1"/>
</dbReference>
<dbReference type="SUPFAM" id="SSF89919">
    <property type="entry name" value="Ribosome-binding factor A, RbfA"/>
    <property type="match status" value="1"/>
</dbReference>
<comment type="function">
    <text evidence="1">One of several proteins that assist in the late maturation steps of the functional core of the 30S ribosomal subunit. Associates with free 30S ribosomal subunits (but not with 30S subunits that are part of 70S ribosomes or polysomes). Required for efficient processing of 16S rRNA. May interact with the 5'-terminal helix region of 16S rRNA.</text>
</comment>
<comment type="subunit">
    <text evidence="1">Monomer. Binds 30S ribosomal subunits, but not 50S ribosomal subunits or 70S ribosomes.</text>
</comment>
<comment type="subcellular location">
    <subcellularLocation>
        <location evidence="1">Cytoplasm</location>
    </subcellularLocation>
</comment>
<comment type="similarity">
    <text evidence="1">Belongs to the RbfA family.</text>
</comment>
<proteinExistence type="inferred from homology"/>
<evidence type="ECO:0000255" key="1">
    <source>
        <dbReference type="HAMAP-Rule" id="MF_00003"/>
    </source>
</evidence>
<accession>B2UAA4</accession>
<organism>
    <name type="scientific">Ralstonia pickettii (strain 12J)</name>
    <dbReference type="NCBI Taxonomy" id="402626"/>
    <lineage>
        <taxon>Bacteria</taxon>
        <taxon>Pseudomonadati</taxon>
        <taxon>Pseudomonadota</taxon>
        <taxon>Betaproteobacteria</taxon>
        <taxon>Burkholderiales</taxon>
        <taxon>Burkholderiaceae</taxon>
        <taxon>Ralstonia</taxon>
    </lineage>
</organism>